<evidence type="ECO:0000255" key="1">
    <source>
        <dbReference type="HAMAP-Rule" id="MF_00446"/>
    </source>
</evidence>
<sequence>MYRTLMSAKLHRARVTEANLNYVGSVTIDEDLLDAVGMMANEKVQIVNNNNGARLETYIIPGERGSGVVCLNGAAARLVQVGDVVIIVSYAMMSEEEAKTHKPKVAVLNERNEIEEMLGQEPARTIL</sequence>
<organism>
    <name type="scientific">Bacillus licheniformis (strain ATCC 14580 / DSM 13 / JCM 2505 / CCUG 7422 / NBRC 12200 / NCIMB 9375 / NCTC 10341 / NRRL NRS-1264 / Gibson 46)</name>
    <dbReference type="NCBI Taxonomy" id="279010"/>
    <lineage>
        <taxon>Bacteria</taxon>
        <taxon>Bacillati</taxon>
        <taxon>Bacillota</taxon>
        <taxon>Bacilli</taxon>
        <taxon>Bacillales</taxon>
        <taxon>Bacillaceae</taxon>
        <taxon>Bacillus</taxon>
    </lineage>
</organism>
<gene>
    <name evidence="1" type="primary">panD</name>
    <name type="ordered locus">BLi02376</name>
    <name type="ordered locus">BL02750</name>
</gene>
<name>PAND_BACLD</name>
<comment type="function">
    <text evidence="1">Catalyzes the pyruvoyl-dependent decarboxylation of aspartate to produce beta-alanine.</text>
</comment>
<comment type="catalytic activity">
    <reaction evidence="1">
        <text>L-aspartate + H(+) = beta-alanine + CO2</text>
        <dbReference type="Rhea" id="RHEA:19497"/>
        <dbReference type="ChEBI" id="CHEBI:15378"/>
        <dbReference type="ChEBI" id="CHEBI:16526"/>
        <dbReference type="ChEBI" id="CHEBI:29991"/>
        <dbReference type="ChEBI" id="CHEBI:57966"/>
        <dbReference type="EC" id="4.1.1.11"/>
    </reaction>
</comment>
<comment type="cofactor">
    <cofactor evidence="1">
        <name>pyruvate</name>
        <dbReference type="ChEBI" id="CHEBI:15361"/>
    </cofactor>
    <text evidence="1">Binds 1 pyruvoyl group covalently per subunit.</text>
</comment>
<comment type="pathway">
    <text evidence="1">Cofactor biosynthesis; (R)-pantothenate biosynthesis; beta-alanine from L-aspartate: step 1/1.</text>
</comment>
<comment type="subunit">
    <text evidence="1">Heterooctamer of four alpha and four beta subunits.</text>
</comment>
<comment type="subcellular location">
    <subcellularLocation>
        <location evidence="1">Cytoplasm</location>
    </subcellularLocation>
</comment>
<comment type="PTM">
    <text evidence="1">Is synthesized initially as an inactive proenzyme, which is activated by self-cleavage at a specific serine bond to produce a beta-subunit with a hydroxyl group at its C-terminus and an alpha-subunit with a pyruvoyl group at its N-terminus.</text>
</comment>
<comment type="similarity">
    <text evidence="1">Belongs to the PanD family.</text>
</comment>
<reference key="1">
    <citation type="journal article" date="2004" name="J. Mol. Microbiol. Biotechnol.">
        <title>The complete genome sequence of Bacillus licheniformis DSM13, an organism with great industrial potential.</title>
        <authorList>
            <person name="Veith B."/>
            <person name="Herzberg C."/>
            <person name="Steckel S."/>
            <person name="Feesche J."/>
            <person name="Maurer K.H."/>
            <person name="Ehrenreich P."/>
            <person name="Baeumer S."/>
            <person name="Henne A."/>
            <person name="Liesegang H."/>
            <person name="Merkl R."/>
            <person name="Ehrenreich A."/>
            <person name="Gottschalk G."/>
        </authorList>
    </citation>
    <scope>NUCLEOTIDE SEQUENCE [LARGE SCALE GENOMIC DNA]</scope>
    <source>
        <strain>ATCC 14580 / DSM 13 / JCM 2505 / CCUG 7422 / NBRC 12200 / NCIMB 9375 / NCTC 10341 / NRRL NRS-1264 / Gibson 46</strain>
    </source>
</reference>
<reference key="2">
    <citation type="journal article" date="2004" name="Genome Biol.">
        <title>Complete genome sequence of the industrial bacterium Bacillus licheniformis and comparisons with closely related Bacillus species.</title>
        <authorList>
            <person name="Rey M.W."/>
            <person name="Ramaiya P."/>
            <person name="Nelson B.A."/>
            <person name="Brody-Karpin S.D."/>
            <person name="Zaretsky E.J."/>
            <person name="Tang M."/>
            <person name="Lopez de Leon A."/>
            <person name="Xiang H."/>
            <person name="Gusti V."/>
            <person name="Clausen I.G."/>
            <person name="Olsen P.B."/>
            <person name="Rasmussen M.D."/>
            <person name="Andersen J.T."/>
            <person name="Joergensen P.L."/>
            <person name="Larsen T.S."/>
            <person name="Sorokin A."/>
            <person name="Bolotin A."/>
            <person name="Lapidus A."/>
            <person name="Galleron N."/>
            <person name="Ehrlich S.D."/>
            <person name="Berka R.M."/>
        </authorList>
    </citation>
    <scope>NUCLEOTIDE SEQUENCE [LARGE SCALE GENOMIC DNA]</scope>
    <source>
        <strain>ATCC 14580 / DSM 13 / JCM 2505 / CCUG 7422 / NBRC 12200 / NCIMB 9375 / NCTC 10341 / NRRL NRS-1264 / Gibson 46</strain>
    </source>
</reference>
<dbReference type="EC" id="4.1.1.11" evidence="1"/>
<dbReference type="EMBL" id="AE017333">
    <property type="protein sequence ID" value="AAU41256.1"/>
    <property type="molecule type" value="Genomic_DNA"/>
</dbReference>
<dbReference type="EMBL" id="CP000002">
    <property type="protein sequence ID" value="AAU23902.1"/>
    <property type="molecule type" value="Genomic_DNA"/>
</dbReference>
<dbReference type="RefSeq" id="WP_003182918.1">
    <property type="nucleotide sequence ID" value="NC_006322.1"/>
</dbReference>
<dbReference type="SMR" id="Q65I58"/>
<dbReference type="STRING" id="279010.BL02750"/>
<dbReference type="GeneID" id="92861025"/>
<dbReference type="KEGG" id="bld:BLi02376"/>
<dbReference type="KEGG" id="bli:BL02750"/>
<dbReference type="eggNOG" id="COG0853">
    <property type="taxonomic scope" value="Bacteria"/>
</dbReference>
<dbReference type="HOGENOM" id="CLU_115305_2_0_9"/>
<dbReference type="UniPathway" id="UPA00028">
    <property type="reaction ID" value="UER00002"/>
</dbReference>
<dbReference type="Proteomes" id="UP000000606">
    <property type="component" value="Chromosome"/>
</dbReference>
<dbReference type="Bgee" id="BL02750">
    <property type="expression patterns" value="Expressed in egg cell and 12 other cell types or tissues"/>
</dbReference>
<dbReference type="GO" id="GO:0005829">
    <property type="term" value="C:cytosol"/>
    <property type="evidence" value="ECO:0007669"/>
    <property type="project" value="TreeGrafter"/>
</dbReference>
<dbReference type="GO" id="GO:0004068">
    <property type="term" value="F:aspartate 1-decarboxylase activity"/>
    <property type="evidence" value="ECO:0007669"/>
    <property type="project" value="UniProtKB-UniRule"/>
</dbReference>
<dbReference type="GO" id="GO:0006523">
    <property type="term" value="P:alanine biosynthetic process"/>
    <property type="evidence" value="ECO:0007669"/>
    <property type="project" value="InterPro"/>
</dbReference>
<dbReference type="GO" id="GO:0015940">
    <property type="term" value="P:pantothenate biosynthetic process"/>
    <property type="evidence" value="ECO:0007669"/>
    <property type="project" value="UniProtKB-UniRule"/>
</dbReference>
<dbReference type="CDD" id="cd06919">
    <property type="entry name" value="Asp_decarbox"/>
    <property type="match status" value="1"/>
</dbReference>
<dbReference type="Gene3D" id="2.40.40.20">
    <property type="match status" value="1"/>
</dbReference>
<dbReference type="HAMAP" id="MF_00446">
    <property type="entry name" value="PanD"/>
    <property type="match status" value="1"/>
</dbReference>
<dbReference type="InterPro" id="IPR009010">
    <property type="entry name" value="Asp_de-COase-like_dom_sf"/>
</dbReference>
<dbReference type="InterPro" id="IPR003190">
    <property type="entry name" value="Asp_decarbox"/>
</dbReference>
<dbReference type="NCBIfam" id="TIGR00223">
    <property type="entry name" value="panD"/>
    <property type="match status" value="1"/>
</dbReference>
<dbReference type="PANTHER" id="PTHR21012">
    <property type="entry name" value="ASPARTATE 1-DECARBOXYLASE"/>
    <property type="match status" value="1"/>
</dbReference>
<dbReference type="PANTHER" id="PTHR21012:SF0">
    <property type="entry name" value="ASPARTATE 1-DECARBOXYLASE"/>
    <property type="match status" value="1"/>
</dbReference>
<dbReference type="Pfam" id="PF02261">
    <property type="entry name" value="Asp_decarbox"/>
    <property type="match status" value="1"/>
</dbReference>
<dbReference type="PIRSF" id="PIRSF006246">
    <property type="entry name" value="Asp_decarbox"/>
    <property type="match status" value="1"/>
</dbReference>
<dbReference type="SUPFAM" id="SSF50692">
    <property type="entry name" value="ADC-like"/>
    <property type="match status" value="1"/>
</dbReference>
<keyword id="KW-0068">Autocatalytic cleavage</keyword>
<keyword id="KW-0963">Cytoplasm</keyword>
<keyword id="KW-0210">Decarboxylase</keyword>
<keyword id="KW-0456">Lyase</keyword>
<keyword id="KW-0566">Pantothenate biosynthesis</keyword>
<keyword id="KW-0670">Pyruvate</keyword>
<keyword id="KW-1185">Reference proteome</keyword>
<keyword id="KW-0704">Schiff base</keyword>
<keyword id="KW-0865">Zymogen</keyword>
<proteinExistence type="inferred from homology"/>
<protein>
    <recommendedName>
        <fullName evidence="1">Aspartate 1-decarboxylase</fullName>
        <ecNumber evidence="1">4.1.1.11</ecNumber>
    </recommendedName>
    <alternativeName>
        <fullName evidence="1">Aspartate alpha-decarboxylase</fullName>
    </alternativeName>
    <component>
        <recommendedName>
            <fullName evidence="1">Aspartate 1-decarboxylase beta chain</fullName>
        </recommendedName>
    </component>
    <component>
        <recommendedName>
            <fullName evidence="1">Aspartate 1-decarboxylase alpha chain</fullName>
        </recommendedName>
    </component>
</protein>
<accession>Q65I58</accession>
<accession>Q62TK7</accession>
<feature type="chain" id="PRO_0000023031" description="Aspartate 1-decarboxylase beta chain" evidence="1">
    <location>
        <begin position="1"/>
        <end position="24"/>
    </location>
</feature>
<feature type="chain" id="PRO_0000023032" description="Aspartate 1-decarboxylase alpha chain" evidence="1">
    <location>
        <begin position="25"/>
        <end position="127"/>
    </location>
</feature>
<feature type="active site" description="Schiff-base intermediate with substrate; via pyruvic acid" evidence="1">
    <location>
        <position position="25"/>
    </location>
</feature>
<feature type="active site" description="Proton donor" evidence="1">
    <location>
        <position position="58"/>
    </location>
</feature>
<feature type="binding site" evidence="1">
    <location>
        <position position="57"/>
    </location>
    <ligand>
        <name>substrate</name>
    </ligand>
</feature>
<feature type="binding site" evidence="1">
    <location>
        <begin position="73"/>
        <end position="75"/>
    </location>
    <ligand>
        <name>substrate</name>
    </ligand>
</feature>
<feature type="modified residue" description="Pyruvic acid (Ser)" evidence="1">
    <location>
        <position position="25"/>
    </location>
</feature>